<dbReference type="EMBL" id="CP017623">
    <property type="protein sequence ID" value="AOW26237.1"/>
    <property type="molecule type" value="Genomic_DNA"/>
</dbReference>
<dbReference type="RefSeq" id="XP_019330654.1">
    <property type="nucleotide sequence ID" value="XM_019475109.1"/>
</dbReference>
<dbReference type="PDB" id="7PZY">
    <property type="method" value="EM"/>
    <property type="resolution" value="2.32 A"/>
    <property type="chains" value="o=1-241"/>
</dbReference>
<dbReference type="PDB" id="7Q08">
    <property type="method" value="EM"/>
    <property type="resolution" value="2.56 A"/>
    <property type="chains" value="o=1-241"/>
</dbReference>
<dbReference type="PDB" id="7Q0F">
    <property type="method" value="EM"/>
    <property type="resolution" value="2.64 A"/>
    <property type="chains" value="o=1-241"/>
</dbReference>
<dbReference type="PDB" id="7Q0P">
    <property type="method" value="EM"/>
    <property type="resolution" value="2.77 A"/>
    <property type="chains" value="o=1-241"/>
</dbReference>
<dbReference type="PDB" id="7Q0R">
    <property type="method" value="EM"/>
    <property type="resolution" value="2.67 A"/>
    <property type="chains" value="o=1-241"/>
</dbReference>
<dbReference type="PDB" id="8C3A">
    <property type="method" value="X-ray"/>
    <property type="resolution" value="3.00 A"/>
    <property type="chains" value="BB/o=1-241"/>
</dbReference>
<dbReference type="PDB" id="8OGJ">
    <property type="method" value="EM"/>
    <property type="resolution" value="3.10 A"/>
    <property type="chains" value="o=1-241"/>
</dbReference>
<dbReference type="PDB" id="8OH6">
    <property type="method" value="X-ray"/>
    <property type="resolution" value="3.35 A"/>
    <property type="chains" value="BB/o=1-241"/>
</dbReference>
<dbReference type="PDB" id="8OI5">
    <property type="method" value="X-ray"/>
    <property type="resolution" value="2.90 A"/>
    <property type="chains" value="BB/o=1-241"/>
</dbReference>
<dbReference type="PDB" id="8OJ3">
    <property type="method" value="X-ray"/>
    <property type="resolution" value="3.50 A"/>
    <property type="chains" value="BB/o=1-241"/>
</dbReference>
<dbReference type="PDBsum" id="7PZY"/>
<dbReference type="PDBsum" id="7Q08"/>
<dbReference type="PDBsum" id="7Q0F"/>
<dbReference type="PDBsum" id="7Q0P"/>
<dbReference type="PDBsum" id="7Q0R"/>
<dbReference type="PDBsum" id="8C3A"/>
<dbReference type="PDBsum" id="8OGJ"/>
<dbReference type="PDBsum" id="8OH6"/>
<dbReference type="PDBsum" id="8OI5"/>
<dbReference type="PDBsum" id="8OJ3"/>
<dbReference type="SMR" id="A0A1D8PDL6"/>
<dbReference type="FunCoup" id="A0A1D8PDL6">
    <property type="interactions" value="1452"/>
</dbReference>
<dbReference type="STRING" id="237561.A0A1D8PDL6"/>
<dbReference type="EnsemblFungi" id="C1_05720W_A-T">
    <property type="protein sequence ID" value="C1_05720W_A-T-p1"/>
    <property type="gene ID" value="C1_05720W_A"/>
</dbReference>
<dbReference type="GeneID" id="30515000"/>
<dbReference type="KEGG" id="cal:CAALFM_C105720WA"/>
<dbReference type="CGD" id="CAL0000182421">
    <property type="gene designation" value="orf19.2478.1"/>
</dbReference>
<dbReference type="VEuPathDB" id="FungiDB:C1_05720W_A"/>
<dbReference type="InParanoid" id="A0A1D8PDL6"/>
<dbReference type="OMA" id="SYYVDAQ"/>
<dbReference type="OrthoDB" id="28644at2759"/>
<dbReference type="Proteomes" id="UP000000559">
    <property type="component" value="Chromosome 1"/>
</dbReference>
<dbReference type="GO" id="GO:0009986">
    <property type="term" value="C:cell surface"/>
    <property type="evidence" value="ECO:0000314"/>
    <property type="project" value="CGD"/>
</dbReference>
<dbReference type="GO" id="GO:0022625">
    <property type="term" value="C:cytosolic large ribosomal subunit"/>
    <property type="evidence" value="ECO:0000318"/>
    <property type="project" value="GO_Central"/>
</dbReference>
<dbReference type="GO" id="GO:0003723">
    <property type="term" value="F:RNA binding"/>
    <property type="evidence" value="ECO:0000318"/>
    <property type="project" value="GO_Central"/>
</dbReference>
<dbReference type="GO" id="GO:0003735">
    <property type="term" value="F:structural constituent of ribosome"/>
    <property type="evidence" value="ECO:0000318"/>
    <property type="project" value="GO_Central"/>
</dbReference>
<dbReference type="GO" id="GO:0000463">
    <property type="term" value="P:maturation of LSU-rRNA from tricistronic rRNA transcript (SSU-rRNA, 5.8S rRNA, LSU-rRNA)"/>
    <property type="evidence" value="ECO:0000318"/>
    <property type="project" value="GO_Central"/>
</dbReference>
<dbReference type="CDD" id="cd01657">
    <property type="entry name" value="Ribosomal_L7_archeal_euk"/>
    <property type="match status" value="1"/>
</dbReference>
<dbReference type="FunFam" id="3.30.1390.20:FF:000002">
    <property type="entry name" value="60S ribosomal protein L7"/>
    <property type="match status" value="1"/>
</dbReference>
<dbReference type="FunFam" id="3.30.1390.20:FF:000003">
    <property type="entry name" value="60S ribosomal protein L7"/>
    <property type="match status" value="1"/>
</dbReference>
<dbReference type="Gene3D" id="3.30.1390.20">
    <property type="entry name" value="Ribosomal protein L30, ferredoxin-like fold domain"/>
    <property type="match status" value="1"/>
</dbReference>
<dbReference type="InterPro" id="IPR036919">
    <property type="entry name" value="Ribo_uL30_ferredoxin-like_sf"/>
</dbReference>
<dbReference type="InterPro" id="IPR039699">
    <property type="entry name" value="Ribosomal_uL30"/>
</dbReference>
<dbReference type="InterPro" id="IPR005998">
    <property type="entry name" value="Ribosomal_uL30_euk"/>
</dbReference>
<dbReference type="InterPro" id="IPR035808">
    <property type="entry name" value="Ribosomal_uL30_euk_arc"/>
</dbReference>
<dbReference type="InterPro" id="IPR016082">
    <property type="entry name" value="Ribosomal_uL30_ferredoxin-like"/>
</dbReference>
<dbReference type="InterPro" id="IPR012988">
    <property type="entry name" value="Ribosomal_uL30_N_euk"/>
</dbReference>
<dbReference type="NCBIfam" id="TIGR01310">
    <property type="entry name" value="uL30_euk"/>
    <property type="match status" value="1"/>
</dbReference>
<dbReference type="PANTHER" id="PTHR11524">
    <property type="entry name" value="60S RIBOSOMAL PROTEIN L7"/>
    <property type="match status" value="1"/>
</dbReference>
<dbReference type="PANTHER" id="PTHR11524:SF16">
    <property type="entry name" value="LARGE RIBOSOMAL SUBUNIT PROTEIN UL30"/>
    <property type="match status" value="1"/>
</dbReference>
<dbReference type="Pfam" id="PF00327">
    <property type="entry name" value="Ribosomal_L30"/>
    <property type="match status" value="1"/>
</dbReference>
<dbReference type="Pfam" id="PF08079">
    <property type="entry name" value="Ribosomal_L30_N"/>
    <property type="match status" value="1"/>
</dbReference>
<dbReference type="SUPFAM" id="SSF55129">
    <property type="entry name" value="Ribosomal protein L30p/L7e"/>
    <property type="match status" value="1"/>
</dbReference>
<accession>A0A1D8PDL6</accession>
<reference key="1">
    <citation type="journal article" date="2004" name="Proc. Natl. Acad. Sci. U.S.A.">
        <title>The diploid genome sequence of Candida albicans.</title>
        <authorList>
            <person name="Jones T."/>
            <person name="Federspiel N.A."/>
            <person name="Chibana H."/>
            <person name="Dungan J."/>
            <person name="Kalman S."/>
            <person name="Magee B.B."/>
            <person name="Newport G."/>
            <person name="Thorstenson Y.R."/>
            <person name="Agabian N."/>
            <person name="Magee P.T."/>
            <person name="Davis R.W."/>
            <person name="Scherer S."/>
        </authorList>
    </citation>
    <scope>NUCLEOTIDE SEQUENCE [LARGE SCALE GENOMIC DNA]</scope>
    <source>
        <strain>SC5314 / ATCC MYA-2876</strain>
    </source>
</reference>
<reference key="2">
    <citation type="journal article" date="2007" name="Genome Biol.">
        <title>Assembly of the Candida albicans genome into sixteen supercontigs aligned on the eight chromosomes.</title>
        <authorList>
            <person name="van het Hoog M."/>
            <person name="Rast T.J."/>
            <person name="Martchenko M."/>
            <person name="Grindle S."/>
            <person name="Dignard D."/>
            <person name="Hogues H."/>
            <person name="Cuomo C."/>
            <person name="Berriman M."/>
            <person name="Scherer S."/>
            <person name="Magee B.B."/>
            <person name="Whiteway M."/>
            <person name="Chibana H."/>
            <person name="Nantel A."/>
            <person name="Magee P.T."/>
        </authorList>
    </citation>
    <scope>GENOME REANNOTATION</scope>
    <source>
        <strain>SC5314 / ATCC MYA-2876</strain>
    </source>
</reference>
<reference key="3">
    <citation type="journal article" date="2013" name="Genome Biol.">
        <title>Assembly of a phased diploid Candida albicans genome facilitates allele-specific measurements and provides a simple model for repeat and indel structure.</title>
        <authorList>
            <person name="Muzzey D."/>
            <person name="Schwartz K."/>
            <person name="Weissman J.S."/>
            <person name="Sherlock G."/>
        </authorList>
    </citation>
    <scope>NUCLEOTIDE SEQUENCE [LARGE SCALE GENOMIC DNA]</scope>
    <scope>GENOME REANNOTATION</scope>
    <source>
        <strain>SC5314 / ATCC MYA-2876</strain>
    </source>
</reference>
<reference evidence="6 7 8" key="4">
    <citation type="journal article" date="2022" name="Sci. Adv.">
        <title>E-site drug specificity of the human pathogen Candida albicans ribosome.</title>
        <authorList>
            <person name="Zgadzay Y."/>
            <person name="Kolosova O."/>
            <person name="Stetsenko A."/>
            <person name="Wu C."/>
            <person name="Bruchlen D."/>
            <person name="Usachev K."/>
            <person name="Validov S."/>
            <person name="Jenner L."/>
            <person name="Rogachev A."/>
            <person name="Yusupova G."/>
            <person name="Sachs M.S."/>
            <person name="Guskov A."/>
            <person name="Yusupov M."/>
        </authorList>
    </citation>
    <scope>STRUCTURE BY ELECTRON MICROSCOPY (2.32 ANGSTROMS) OF THE 80S RIBOSOME</scope>
    <scope>SUBUNIT</scope>
</reference>
<proteinExistence type="evidence at protein level"/>
<feature type="chain" id="PRO_0000456492" description="Large ribosomal subunit protein uL30">
    <location>
        <begin position="1"/>
        <end position="241"/>
    </location>
</feature>
<feature type="region of interest" description="Disordered" evidence="1">
    <location>
        <begin position="1"/>
        <end position="32"/>
    </location>
</feature>
<feature type="compositionally biased region" description="Basic and acidic residues" evidence="1">
    <location>
        <begin position="9"/>
        <end position="26"/>
    </location>
</feature>
<name>RL7A_CANAL</name>
<protein>
    <recommendedName>
        <fullName evidence="3">Large ribosomal subunit protein uL30</fullName>
    </recommendedName>
    <alternativeName>
        <fullName evidence="3">60S ribosomal protein L7-A</fullName>
    </alternativeName>
</protein>
<organism>
    <name type="scientific">Candida albicans (strain SC5314 / ATCC MYA-2876)</name>
    <name type="common">Yeast</name>
    <dbReference type="NCBI Taxonomy" id="237561"/>
    <lineage>
        <taxon>Eukaryota</taxon>
        <taxon>Fungi</taxon>
        <taxon>Dikarya</taxon>
        <taxon>Ascomycota</taxon>
        <taxon>Saccharomycotina</taxon>
        <taxon>Pichiomycetes</taxon>
        <taxon>Debaryomycetaceae</taxon>
        <taxon>Candida/Lodderomyces clade</taxon>
        <taxon>Candida</taxon>
    </lineage>
</organism>
<keyword id="KW-0002">3D-structure</keyword>
<keyword id="KW-0963">Cytoplasm</keyword>
<keyword id="KW-1185">Reference proteome</keyword>
<keyword id="KW-0687">Ribonucleoprotein</keyword>
<keyword id="KW-0689">Ribosomal protein</keyword>
<sequence>MATTLKPETLQKKEKAQQKTAEERAAAKKVRKAANKEKRKVIFDRAAAYQKEYTEAERSVIKAKRDAKASNSYYVDAQPKLVFVVRIKGINKIPPKPRKVLQLLRLTQINAGVFVRLTKATSELIKLAEPYVAYGYPSLSTIRQLVYKRGFGKVNKQRIALSDNAIIEANLGKFNILSIEDLIHEIYTVGPNFKQVSNFLWPFKLSNPNGGFRARKFQHFIQGGDTGNREQFINALVKQMN</sequence>
<evidence type="ECO:0000256" key="1">
    <source>
        <dbReference type="SAM" id="MobiDB-lite"/>
    </source>
</evidence>
<evidence type="ECO:0000269" key="2">
    <source>
    </source>
</evidence>
<evidence type="ECO:0000303" key="3">
    <source>
    </source>
</evidence>
<evidence type="ECO:0000305" key="4"/>
<evidence type="ECO:0000305" key="5">
    <source>
    </source>
</evidence>
<evidence type="ECO:0007744" key="6">
    <source>
        <dbReference type="PDB" id="7PZY"/>
    </source>
</evidence>
<evidence type="ECO:0007744" key="7">
    <source>
        <dbReference type="PDB" id="7Q0F"/>
    </source>
</evidence>
<evidence type="ECO:0007744" key="8">
    <source>
        <dbReference type="PDB" id="7Q0P"/>
    </source>
</evidence>
<gene>
    <name evidence="3" type="primary">RPL7A</name>
    <name type="ordered locus">orf19.2478.1</name>
    <name type="ORF">CAALFM_C105720WA</name>
</gene>
<comment type="function">
    <text evidence="5">Component of the ribosome, a large ribonucleoprotein complex responsible for the synthesis of proteins in the cell. The small ribosomal subunit (SSU) binds messenger RNAs (mRNAs) and translates the encoded message by selecting cognate aminoacyl-transfer RNA (tRNA) molecules. The large subunit (LSU) contains the ribosomal catalytic site termed the peptidyl transferase center (PTC), which catalyzes the formation of peptide bonds, thereby polymerizing the amino acids delivered by tRNAs into a polypeptide chain. The nascent polypeptides leave the ribosome through a tunnel in the LSU and interact with protein factors that function in enzymatic processing, targeting, and the membrane insertion of nascent chains at the exit of the ribosomal tunnel.</text>
</comment>
<comment type="subunit">
    <text evidence="2">Component of the large ribosomal subunit (PubMed:35613268). Mature ribosomes consist of a small (40S) and a large (60S) subunit (PubMed:35613268). The 40S subunit contains about 32 different proteins and 1 molecule of RNA (18S) (PubMed:35613268). The 60S subunit contains 45 different proteins and 3 molecules of RNA (25S, 5.8S and 5S) (PubMed:35613268).</text>
</comment>
<comment type="subcellular location">
    <subcellularLocation>
        <location evidence="5">Cytoplasm</location>
    </subcellularLocation>
</comment>
<comment type="similarity">
    <text evidence="4">Belongs to the universal ribosomal protein uL30 family.</text>
</comment>